<protein>
    <recommendedName>
        <fullName evidence="1">Phosphoserine aminotransferase</fullName>
        <ecNumber evidence="1">2.6.1.52</ecNumber>
    </recommendedName>
    <alternativeName>
        <fullName evidence="1">Phosphohydroxythreonine aminotransferase</fullName>
        <shortName evidence="1">PSAT</shortName>
    </alternativeName>
</protein>
<gene>
    <name evidence="1" type="primary">serC</name>
    <name type="ordered locus">Bcen_0563</name>
</gene>
<keyword id="KW-0028">Amino-acid biosynthesis</keyword>
<keyword id="KW-0032">Aminotransferase</keyword>
<keyword id="KW-0963">Cytoplasm</keyword>
<keyword id="KW-0663">Pyridoxal phosphate</keyword>
<keyword id="KW-0664">Pyridoxine biosynthesis</keyword>
<keyword id="KW-0718">Serine biosynthesis</keyword>
<keyword id="KW-0808">Transferase</keyword>
<sequence>MRVFNFSAGPAAMPEEVLRQAADEMLDWHGSGMSVMEMSHRGKEFMSIHEAALTDLRDLLGVPASHRILFLQGGGIAENAIVPMNLLGARKTADFVVTGSWSQKSFGEAKKFCAPHLAASGKTEAGFTRAPARAEWQLSDDPAYVHLCTNETIDGVETFEIPDLGDVPLVADVSSHILSRPMDVAKYGVLFGGAQKNIGMAGVTVVIVREDLLDRALSICPSAFEWKTIAANNSLYNTPPTYAIYIAGLVFQWLKRQGGLEAIEARNIEKSKLLYDTIDASSFYLNKVEPAARSRMNVPFFLADETRNEDFLAGAKARGLLQLKGHKSVGGMRASIYNAVPLEGVKALVEYMKDFEQRGA</sequence>
<name>SERC_BURO1</name>
<proteinExistence type="inferred from homology"/>
<reference key="1">
    <citation type="submission" date="2006-05" db="EMBL/GenBank/DDBJ databases">
        <title>Complete sequence of chromosome 1 of Burkholderia cenocepacia AU 1054.</title>
        <authorList>
            <consortium name="US DOE Joint Genome Institute"/>
            <person name="Copeland A."/>
            <person name="Lucas S."/>
            <person name="Lapidus A."/>
            <person name="Barry K."/>
            <person name="Detter J.C."/>
            <person name="Glavina del Rio T."/>
            <person name="Hammon N."/>
            <person name="Israni S."/>
            <person name="Dalin E."/>
            <person name="Tice H."/>
            <person name="Pitluck S."/>
            <person name="Chain P."/>
            <person name="Malfatti S."/>
            <person name="Shin M."/>
            <person name="Vergez L."/>
            <person name="Schmutz J."/>
            <person name="Larimer F."/>
            <person name="Land M."/>
            <person name="Hauser L."/>
            <person name="Kyrpides N."/>
            <person name="Lykidis A."/>
            <person name="LiPuma J.J."/>
            <person name="Konstantinidis K."/>
            <person name="Tiedje J.M."/>
            <person name="Richardson P."/>
        </authorList>
    </citation>
    <scope>NUCLEOTIDE SEQUENCE [LARGE SCALE GENOMIC DNA]</scope>
    <source>
        <strain>AU 1054</strain>
    </source>
</reference>
<organism>
    <name type="scientific">Burkholderia orbicola (strain AU 1054)</name>
    <dbReference type="NCBI Taxonomy" id="331271"/>
    <lineage>
        <taxon>Bacteria</taxon>
        <taxon>Pseudomonadati</taxon>
        <taxon>Pseudomonadota</taxon>
        <taxon>Betaproteobacteria</taxon>
        <taxon>Burkholderiales</taxon>
        <taxon>Burkholderiaceae</taxon>
        <taxon>Burkholderia</taxon>
        <taxon>Burkholderia cepacia complex</taxon>
        <taxon>Burkholderia orbicola</taxon>
    </lineage>
</organism>
<evidence type="ECO:0000255" key="1">
    <source>
        <dbReference type="HAMAP-Rule" id="MF_00160"/>
    </source>
</evidence>
<accession>Q1BY31</accession>
<dbReference type="EC" id="2.6.1.52" evidence="1"/>
<dbReference type="EMBL" id="CP000378">
    <property type="protein sequence ID" value="ABF75474.1"/>
    <property type="molecule type" value="Genomic_DNA"/>
</dbReference>
<dbReference type="SMR" id="Q1BY31"/>
<dbReference type="HOGENOM" id="CLU_034866_0_2_4"/>
<dbReference type="UniPathway" id="UPA00135">
    <property type="reaction ID" value="UER00197"/>
</dbReference>
<dbReference type="UniPathway" id="UPA00244">
    <property type="reaction ID" value="UER00311"/>
</dbReference>
<dbReference type="GO" id="GO:0005737">
    <property type="term" value="C:cytoplasm"/>
    <property type="evidence" value="ECO:0007669"/>
    <property type="project" value="UniProtKB-SubCell"/>
</dbReference>
<dbReference type="GO" id="GO:0004648">
    <property type="term" value="F:O-phospho-L-serine:2-oxoglutarate aminotransferase activity"/>
    <property type="evidence" value="ECO:0007669"/>
    <property type="project" value="UniProtKB-UniRule"/>
</dbReference>
<dbReference type="GO" id="GO:0030170">
    <property type="term" value="F:pyridoxal phosphate binding"/>
    <property type="evidence" value="ECO:0007669"/>
    <property type="project" value="UniProtKB-UniRule"/>
</dbReference>
<dbReference type="GO" id="GO:0006564">
    <property type="term" value="P:L-serine biosynthetic process"/>
    <property type="evidence" value="ECO:0007669"/>
    <property type="project" value="UniProtKB-UniRule"/>
</dbReference>
<dbReference type="GO" id="GO:0008615">
    <property type="term" value="P:pyridoxine biosynthetic process"/>
    <property type="evidence" value="ECO:0007669"/>
    <property type="project" value="UniProtKB-UniRule"/>
</dbReference>
<dbReference type="CDD" id="cd00611">
    <property type="entry name" value="PSAT_like"/>
    <property type="match status" value="1"/>
</dbReference>
<dbReference type="FunFam" id="3.40.640.10:FF:000010">
    <property type="entry name" value="Phosphoserine aminotransferase"/>
    <property type="match status" value="1"/>
</dbReference>
<dbReference type="FunFam" id="3.90.1150.10:FF:000006">
    <property type="entry name" value="Phosphoserine aminotransferase"/>
    <property type="match status" value="1"/>
</dbReference>
<dbReference type="Gene3D" id="3.90.1150.10">
    <property type="entry name" value="Aspartate Aminotransferase, domain 1"/>
    <property type="match status" value="1"/>
</dbReference>
<dbReference type="Gene3D" id="3.40.640.10">
    <property type="entry name" value="Type I PLP-dependent aspartate aminotransferase-like (Major domain)"/>
    <property type="match status" value="1"/>
</dbReference>
<dbReference type="HAMAP" id="MF_00160">
    <property type="entry name" value="SerC_aminotrans_5"/>
    <property type="match status" value="1"/>
</dbReference>
<dbReference type="InterPro" id="IPR000192">
    <property type="entry name" value="Aminotrans_V_dom"/>
</dbReference>
<dbReference type="InterPro" id="IPR020578">
    <property type="entry name" value="Aminotrans_V_PyrdxlP_BS"/>
</dbReference>
<dbReference type="InterPro" id="IPR022278">
    <property type="entry name" value="Pser_aminoTfrase"/>
</dbReference>
<dbReference type="InterPro" id="IPR015424">
    <property type="entry name" value="PyrdxlP-dep_Trfase"/>
</dbReference>
<dbReference type="InterPro" id="IPR015421">
    <property type="entry name" value="PyrdxlP-dep_Trfase_major"/>
</dbReference>
<dbReference type="InterPro" id="IPR015422">
    <property type="entry name" value="PyrdxlP-dep_Trfase_small"/>
</dbReference>
<dbReference type="NCBIfam" id="NF003764">
    <property type="entry name" value="PRK05355.1"/>
    <property type="match status" value="1"/>
</dbReference>
<dbReference type="NCBIfam" id="TIGR01364">
    <property type="entry name" value="serC_1"/>
    <property type="match status" value="1"/>
</dbReference>
<dbReference type="PANTHER" id="PTHR43247">
    <property type="entry name" value="PHOSPHOSERINE AMINOTRANSFERASE"/>
    <property type="match status" value="1"/>
</dbReference>
<dbReference type="PANTHER" id="PTHR43247:SF1">
    <property type="entry name" value="PHOSPHOSERINE AMINOTRANSFERASE"/>
    <property type="match status" value="1"/>
</dbReference>
<dbReference type="Pfam" id="PF00266">
    <property type="entry name" value="Aminotran_5"/>
    <property type="match status" value="1"/>
</dbReference>
<dbReference type="PIRSF" id="PIRSF000525">
    <property type="entry name" value="SerC"/>
    <property type="match status" value="1"/>
</dbReference>
<dbReference type="SUPFAM" id="SSF53383">
    <property type="entry name" value="PLP-dependent transferases"/>
    <property type="match status" value="1"/>
</dbReference>
<dbReference type="PROSITE" id="PS00595">
    <property type="entry name" value="AA_TRANSFER_CLASS_5"/>
    <property type="match status" value="1"/>
</dbReference>
<feature type="chain" id="PRO_1000058202" description="Phosphoserine aminotransferase">
    <location>
        <begin position="1"/>
        <end position="360"/>
    </location>
</feature>
<feature type="binding site" evidence="1">
    <location>
        <position position="41"/>
    </location>
    <ligand>
        <name>L-glutamate</name>
        <dbReference type="ChEBI" id="CHEBI:29985"/>
    </ligand>
</feature>
<feature type="binding site" evidence="1">
    <location>
        <position position="101"/>
    </location>
    <ligand>
        <name>pyridoxal 5'-phosphate</name>
        <dbReference type="ChEBI" id="CHEBI:597326"/>
    </ligand>
</feature>
<feature type="binding site" evidence="1">
    <location>
        <position position="152"/>
    </location>
    <ligand>
        <name>pyridoxal 5'-phosphate</name>
        <dbReference type="ChEBI" id="CHEBI:597326"/>
    </ligand>
</feature>
<feature type="binding site" evidence="1">
    <location>
        <position position="172"/>
    </location>
    <ligand>
        <name>pyridoxal 5'-phosphate</name>
        <dbReference type="ChEBI" id="CHEBI:597326"/>
    </ligand>
</feature>
<feature type="binding site" evidence="1">
    <location>
        <position position="195"/>
    </location>
    <ligand>
        <name>pyridoxal 5'-phosphate</name>
        <dbReference type="ChEBI" id="CHEBI:597326"/>
    </ligand>
</feature>
<feature type="binding site" evidence="1">
    <location>
        <begin position="237"/>
        <end position="238"/>
    </location>
    <ligand>
        <name>pyridoxal 5'-phosphate</name>
        <dbReference type="ChEBI" id="CHEBI:597326"/>
    </ligand>
</feature>
<feature type="modified residue" description="N6-(pyridoxal phosphate)lysine" evidence="1">
    <location>
        <position position="196"/>
    </location>
</feature>
<comment type="function">
    <text evidence="1">Catalyzes the reversible conversion of 3-phosphohydroxypyruvate to phosphoserine and of 3-hydroxy-2-oxo-4-phosphonooxybutanoate to phosphohydroxythreonine.</text>
</comment>
<comment type="catalytic activity">
    <reaction evidence="1">
        <text>O-phospho-L-serine + 2-oxoglutarate = 3-phosphooxypyruvate + L-glutamate</text>
        <dbReference type="Rhea" id="RHEA:14329"/>
        <dbReference type="ChEBI" id="CHEBI:16810"/>
        <dbReference type="ChEBI" id="CHEBI:18110"/>
        <dbReference type="ChEBI" id="CHEBI:29985"/>
        <dbReference type="ChEBI" id="CHEBI:57524"/>
        <dbReference type="EC" id="2.6.1.52"/>
    </reaction>
</comment>
<comment type="catalytic activity">
    <reaction evidence="1">
        <text>4-(phosphooxy)-L-threonine + 2-oxoglutarate = (R)-3-hydroxy-2-oxo-4-phosphooxybutanoate + L-glutamate</text>
        <dbReference type="Rhea" id="RHEA:16573"/>
        <dbReference type="ChEBI" id="CHEBI:16810"/>
        <dbReference type="ChEBI" id="CHEBI:29985"/>
        <dbReference type="ChEBI" id="CHEBI:58452"/>
        <dbReference type="ChEBI" id="CHEBI:58538"/>
        <dbReference type="EC" id="2.6.1.52"/>
    </reaction>
</comment>
<comment type="cofactor">
    <cofactor evidence="1">
        <name>pyridoxal 5'-phosphate</name>
        <dbReference type="ChEBI" id="CHEBI:597326"/>
    </cofactor>
    <text evidence="1">Binds 1 pyridoxal phosphate per subunit.</text>
</comment>
<comment type="pathway">
    <text evidence="1">Amino-acid biosynthesis; L-serine biosynthesis; L-serine from 3-phospho-D-glycerate: step 2/3.</text>
</comment>
<comment type="pathway">
    <text evidence="1">Cofactor biosynthesis; pyridoxine 5'-phosphate biosynthesis; pyridoxine 5'-phosphate from D-erythrose 4-phosphate: step 3/5.</text>
</comment>
<comment type="subunit">
    <text evidence="1">Homodimer.</text>
</comment>
<comment type="subcellular location">
    <subcellularLocation>
        <location evidence="1">Cytoplasm</location>
    </subcellularLocation>
</comment>
<comment type="similarity">
    <text evidence="1">Belongs to the class-V pyridoxal-phosphate-dependent aminotransferase family. SerC subfamily.</text>
</comment>